<protein>
    <recommendedName>
        <fullName evidence="1">Putative antitoxin VapB15</fullName>
    </recommendedName>
</protein>
<name>VPB15_ARCFU</name>
<comment type="function">
    <text evidence="1">Possibly the antitoxin component of a type II toxin-antitoxin (TA) system. Its cognate toxin is VapC15 (Potential).</text>
</comment>
<comment type="similarity">
    <text evidence="1">Belongs to the UPF0330 family.</text>
</comment>
<accession>O28794</accession>
<reference key="1">
    <citation type="journal article" date="1997" name="Nature">
        <title>The complete genome sequence of the hyperthermophilic, sulphate-reducing archaeon Archaeoglobus fulgidus.</title>
        <authorList>
            <person name="Klenk H.-P."/>
            <person name="Clayton R.A."/>
            <person name="Tomb J.-F."/>
            <person name="White O."/>
            <person name="Nelson K.E."/>
            <person name="Ketchum K.A."/>
            <person name="Dodson R.J."/>
            <person name="Gwinn M.L."/>
            <person name="Hickey E.K."/>
            <person name="Peterson J.D."/>
            <person name="Richardson D.L."/>
            <person name="Kerlavage A.R."/>
            <person name="Graham D.E."/>
            <person name="Kyrpides N.C."/>
            <person name="Fleischmann R.D."/>
            <person name="Quackenbush J."/>
            <person name="Lee N.H."/>
            <person name="Sutton G.G."/>
            <person name="Gill S.R."/>
            <person name="Kirkness E.F."/>
            <person name="Dougherty B.A."/>
            <person name="McKenney K."/>
            <person name="Adams M.D."/>
            <person name="Loftus B.J."/>
            <person name="Peterson S.N."/>
            <person name="Reich C.I."/>
            <person name="McNeil L.K."/>
            <person name="Badger J.H."/>
            <person name="Glodek A."/>
            <person name="Zhou L."/>
            <person name="Overbeek R."/>
            <person name="Gocayne J.D."/>
            <person name="Weidman J.F."/>
            <person name="McDonald L.A."/>
            <person name="Utterback T.R."/>
            <person name="Cotton M.D."/>
            <person name="Spriggs T."/>
            <person name="Artiach P."/>
            <person name="Kaine B.P."/>
            <person name="Sykes S.M."/>
            <person name="Sadow P.W."/>
            <person name="D'Andrea K.P."/>
            <person name="Bowman C."/>
            <person name="Fujii C."/>
            <person name="Garland S.A."/>
            <person name="Mason T.M."/>
            <person name="Olsen G.J."/>
            <person name="Fraser C.M."/>
            <person name="Smith H.O."/>
            <person name="Woese C.R."/>
            <person name="Venter J.C."/>
        </authorList>
    </citation>
    <scope>NUCLEOTIDE SEQUENCE [LARGE SCALE GENOMIC DNA]</scope>
    <source>
        <strain>ATCC 49558 / DSM 4304 / JCM 9628 / NBRC 100126 / VC-16</strain>
    </source>
</reference>
<reference key="2">
    <citation type="journal article" date="2005" name="Nucleic Acids Res.">
        <title>Toxin-antitoxin loci are highly abundant in free-living but lost from host-associated prokaryotes.</title>
        <authorList>
            <person name="Pandey D.P."/>
            <person name="Gerdes K."/>
        </authorList>
    </citation>
    <scope>POSSIBLE FUNCTION</scope>
    <source>
        <strain>ATCC 49558 / DSM 4304 / JCM 9628 / NBRC 100126 / VC-16</strain>
    </source>
</reference>
<feature type="chain" id="PRO_0000157103" description="Putative antitoxin VapB15">
    <location>
        <begin position="1"/>
        <end position="71"/>
    </location>
</feature>
<sequence>MPTKTITITLEAYERLKREKREGESFSDVIIRLTEKRRDLLEFAGKWKDSGEEIEKIILEGRKEFDKHVLS</sequence>
<proteinExistence type="inferred from homology"/>
<organism>
    <name type="scientific">Archaeoglobus fulgidus (strain ATCC 49558 / DSM 4304 / JCM 9628 / NBRC 100126 / VC-16)</name>
    <dbReference type="NCBI Taxonomy" id="224325"/>
    <lineage>
        <taxon>Archaea</taxon>
        <taxon>Methanobacteriati</taxon>
        <taxon>Methanobacteriota</taxon>
        <taxon>Archaeoglobi</taxon>
        <taxon>Archaeoglobales</taxon>
        <taxon>Archaeoglobaceae</taxon>
        <taxon>Archaeoglobus</taxon>
    </lineage>
</organism>
<gene>
    <name type="primary">vapB15</name>
    <name type="ordered locus">AF_1478</name>
</gene>
<evidence type="ECO:0000255" key="1">
    <source>
        <dbReference type="HAMAP-Rule" id="MF_00794"/>
    </source>
</evidence>
<keyword id="KW-1185">Reference proteome</keyword>
<keyword id="KW-1277">Toxin-antitoxin system</keyword>
<dbReference type="EMBL" id="AE000782">
    <property type="protein sequence ID" value="AAB89772.1"/>
    <property type="molecule type" value="Genomic_DNA"/>
</dbReference>
<dbReference type="PIR" id="E69434">
    <property type="entry name" value="E69434"/>
</dbReference>
<dbReference type="RefSeq" id="WP_010878975.1">
    <property type="nucleotide sequence ID" value="NC_000917.1"/>
</dbReference>
<dbReference type="SMR" id="O28794"/>
<dbReference type="STRING" id="224325.AF_1478"/>
<dbReference type="PaxDb" id="224325-AF_1478"/>
<dbReference type="EnsemblBacteria" id="AAB89772">
    <property type="protein sequence ID" value="AAB89772"/>
    <property type="gene ID" value="AF_1478"/>
</dbReference>
<dbReference type="KEGG" id="afu:AF_1478"/>
<dbReference type="eggNOG" id="arCOG02681">
    <property type="taxonomic scope" value="Archaea"/>
</dbReference>
<dbReference type="HOGENOM" id="CLU_170073_1_1_2"/>
<dbReference type="OrthoDB" id="9187at2157"/>
<dbReference type="PhylomeDB" id="O28794"/>
<dbReference type="Proteomes" id="UP000002199">
    <property type="component" value="Chromosome"/>
</dbReference>
<dbReference type="HAMAP" id="MF_00794">
    <property type="entry name" value="UPF0330"/>
    <property type="match status" value="1"/>
</dbReference>
<dbReference type="InterPro" id="IPR003847">
    <property type="entry name" value="Put_antitoxin"/>
</dbReference>
<dbReference type="NCBIfam" id="NF010249">
    <property type="entry name" value="PRK13696.1-1"/>
    <property type="match status" value="1"/>
</dbReference>
<dbReference type="Pfam" id="PF02697">
    <property type="entry name" value="VAPB_antitox"/>
    <property type="match status" value="1"/>
</dbReference>